<proteinExistence type="inferred from homology"/>
<gene>
    <name evidence="1" type="primary">argB</name>
    <name type="ordered locus">ABBFA_002726</name>
</gene>
<organism>
    <name type="scientific">Acinetobacter baumannii (strain AB307-0294)</name>
    <dbReference type="NCBI Taxonomy" id="557600"/>
    <lineage>
        <taxon>Bacteria</taxon>
        <taxon>Pseudomonadati</taxon>
        <taxon>Pseudomonadota</taxon>
        <taxon>Gammaproteobacteria</taxon>
        <taxon>Moraxellales</taxon>
        <taxon>Moraxellaceae</taxon>
        <taxon>Acinetobacter</taxon>
        <taxon>Acinetobacter calcoaceticus/baumannii complex</taxon>
    </lineage>
</organism>
<reference key="1">
    <citation type="journal article" date="2008" name="J. Bacteriol.">
        <title>Comparative genome sequence analysis of multidrug-resistant Acinetobacter baumannii.</title>
        <authorList>
            <person name="Adams M.D."/>
            <person name="Goglin K."/>
            <person name="Molyneaux N."/>
            <person name="Hujer K.M."/>
            <person name="Lavender H."/>
            <person name="Jamison J.J."/>
            <person name="MacDonald I.J."/>
            <person name="Martin K.M."/>
            <person name="Russo T."/>
            <person name="Campagnari A.A."/>
            <person name="Hujer A.M."/>
            <person name="Bonomo R.A."/>
            <person name="Gill S.R."/>
        </authorList>
    </citation>
    <scope>NUCLEOTIDE SEQUENCE [LARGE SCALE GENOMIC DNA]</scope>
    <source>
        <strain>AB307-0294</strain>
    </source>
</reference>
<name>ARGB_ACIB3</name>
<feature type="chain" id="PRO_1000117112" description="Acetylglutamate kinase">
    <location>
        <begin position="1"/>
        <end position="302"/>
    </location>
</feature>
<feature type="binding site" evidence="1">
    <location>
        <begin position="68"/>
        <end position="69"/>
    </location>
    <ligand>
        <name>substrate</name>
    </ligand>
</feature>
<feature type="binding site" evidence="1">
    <location>
        <position position="90"/>
    </location>
    <ligand>
        <name>substrate</name>
    </ligand>
</feature>
<feature type="binding site" evidence="1">
    <location>
        <position position="194"/>
    </location>
    <ligand>
        <name>substrate</name>
    </ligand>
</feature>
<feature type="site" description="Transition state stabilizer" evidence="1">
    <location>
        <position position="33"/>
    </location>
</feature>
<feature type="site" description="Transition state stabilizer" evidence="1">
    <location>
        <position position="254"/>
    </location>
</feature>
<evidence type="ECO:0000255" key="1">
    <source>
        <dbReference type="HAMAP-Rule" id="MF_00082"/>
    </source>
</evidence>
<dbReference type="EC" id="2.7.2.8" evidence="1"/>
<dbReference type="EMBL" id="CP001172">
    <property type="protein sequence ID" value="ACJ58234.1"/>
    <property type="molecule type" value="Genomic_DNA"/>
</dbReference>
<dbReference type="RefSeq" id="WP_001135419.1">
    <property type="nucleotide sequence ID" value="NZ_CP001172.1"/>
</dbReference>
<dbReference type="SMR" id="B7GYK7"/>
<dbReference type="GeneID" id="92892817"/>
<dbReference type="HOGENOM" id="CLU_053680_0_0_6"/>
<dbReference type="UniPathway" id="UPA00068">
    <property type="reaction ID" value="UER00107"/>
</dbReference>
<dbReference type="Proteomes" id="UP000006924">
    <property type="component" value="Chromosome"/>
</dbReference>
<dbReference type="GO" id="GO:0005737">
    <property type="term" value="C:cytoplasm"/>
    <property type="evidence" value="ECO:0007669"/>
    <property type="project" value="UniProtKB-SubCell"/>
</dbReference>
<dbReference type="GO" id="GO:0003991">
    <property type="term" value="F:acetylglutamate kinase activity"/>
    <property type="evidence" value="ECO:0007669"/>
    <property type="project" value="UniProtKB-UniRule"/>
</dbReference>
<dbReference type="GO" id="GO:0005524">
    <property type="term" value="F:ATP binding"/>
    <property type="evidence" value="ECO:0007669"/>
    <property type="project" value="UniProtKB-UniRule"/>
</dbReference>
<dbReference type="GO" id="GO:0042450">
    <property type="term" value="P:arginine biosynthetic process via ornithine"/>
    <property type="evidence" value="ECO:0007669"/>
    <property type="project" value="UniProtKB-UniRule"/>
</dbReference>
<dbReference type="GO" id="GO:0006526">
    <property type="term" value="P:L-arginine biosynthetic process"/>
    <property type="evidence" value="ECO:0007669"/>
    <property type="project" value="UniProtKB-UniPathway"/>
</dbReference>
<dbReference type="CDD" id="cd04250">
    <property type="entry name" value="AAK_NAGK-C"/>
    <property type="match status" value="1"/>
</dbReference>
<dbReference type="FunFam" id="3.40.1160.10:FF:000004">
    <property type="entry name" value="Acetylglutamate kinase"/>
    <property type="match status" value="1"/>
</dbReference>
<dbReference type="Gene3D" id="3.40.1160.10">
    <property type="entry name" value="Acetylglutamate kinase-like"/>
    <property type="match status" value="1"/>
</dbReference>
<dbReference type="HAMAP" id="MF_00082">
    <property type="entry name" value="ArgB"/>
    <property type="match status" value="1"/>
</dbReference>
<dbReference type="InterPro" id="IPR036393">
    <property type="entry name" value="AceGlu_kinase-like_sf"/>
</dbReference>
<dbReference type="InterPro" id="IPR004662">
    <property type="entry name" value="AcgluKinase_fam"/>
</dbReference>
<dbReference type="InterPro" id="IPR037528">
    <property type="entry name" value="ArgB"/>
</dbReference>
<dbReference type="InterPro" id="IPR001048">
    <property type="entry name" value="Asp/Glu/Uridylate_kinase"/>
</dbReference>
<dbReference type="InterPro" id="IPR041727">
    <property type="entry name" value="NAGK-C"/>
</dbReference>
<dbReference type="NCBIfam" id="TIGR00761">
    <property type="entry name" value="argB"/>
    <property type="match status" value="1"/>
</dbReference>
<dbReference type="PANTHER" id="PTHR23342">
    <property type="entry name" value="N-ACETYLGLUTAMATE SYNTHASE"/>
    <property type="match status" value="1"/>
</dbReference>
<dbReference type="PANTHER" id="PTHR23342:SF0">
    <property type="entry name" value="N-ACETYLGLUTAMATE SYNTHASE, MITOCHONDRIAL"/>
    <property type="match status" value="1"/>
</dbReference>
<dbReference type="Pfam" id="PF00696">
    <property type="entry name" value="AA_kinase"/>
    <property type="match status" value="1"/>
</dbReference>
<dbReference type="PIRSF" id="PIRSF000728">
    <property type="entry name" value="NAGK"/>
    <property type="match status" value="1"/>
</dbReference>
<dbReference type="SUPFAM" id="SSF53633">
    <property type="entry name" value="Carbamate kinase-like"/>
    <property type="match status" value="1"/>
</dbReference>
<sequence length="302" mass="32293">MPQDQHLGVDKAKILIEALPYIQRFSGKTLVVKYGGNAMTDPELESSFARDIVLLKTVGLNPIVVHGGGPQVDSFLKQLGRESDRIDGMRVTDEATMEVVEMVLGGSVNKSIVNLINKHGGRAIGLTGQDGNLLRARKLLMEKQEEDGSIKHIDLGMVGEVTGVKTDVLEMFTQSDFIPVIAPLGVDEKGNTYNINADLVAGKVAEALGAEKLILLTNISGVLDENKNLLTGLTTQEVDRLIETGVIYGGMIPKVGCALDAVKGGVVSAHIVDGRVPHATLLEIFTDHGVGTLISNRTQTTH</sequence>
<accession>B7GYK7</accession>
<keyword id="KW-0028">Amino-acid biosynthesis</keyword>
<keyword id="KW-0055">Arginine biosynthesis</keyword>
<keyword id="KW-0067">ATP-binding</keyword>
<keyword id="KW-0963">Cytoplasm</keyword>
<keyword id="KW-0418">Kinase</keyword>
<keyword id="KW-0547">Nucleotide-binding</keyword>
<keyword id="KW-0808">Transferase</keyword>
<comment type="function">
    <text evidence="1">Catalyzes the ATP-dependent phosphorylation of N-acetyl-L-glutamate.</text>
</comment>
<comment type="catalytic activity">
    <reaction evidence="1">
        <text>N-acetyl-L-glutamate + ATP = N-acetyl-L-glutamyl 5-phosphate + ADP</text>
        <dbReference type="Rhea" id="RHEA:14629"/>
        <dbReference type="ChEBI" id="CHEBI:30616"/>
        <dbReference type="ChEBI" id="CHEBI:44337"/>
        <dbReference type="ChEBI" id="CHEBI:57936"/>
        <dbReference type="ChEBI" id="CHEBI:456216"/>
        <dbReference type="EC" id="2.7.2.8"/>
    </reaction>
</comment>
<comment type="pathway">
    <text evidence="1">Amino-acid biosynthesis; L-arginine biosynthesis; N(2)-acetyl-L-ornithine from L-glutamate: step 2/4.</text>
</comment>
<comment type="subcellular location">
    <subcellularLocation>
        <location evidence="1">Cytoplasm</location>
    </subcellularLocation>
</comment>
<comment type="similarity">
    <text evidence="1">Belongs to the acetylglutamate kinase family. ArgB subfamily.</text>
</comment>
<protein>
    <recommendedName>
        <fullName evidence="1">Acetylglutamate kinase</fullName>
        <ecNumber evidence="1">2.7.2.8</ecNumber>
    </recommendedName>
    <alternativeName>
        <fullName evidence="1">N-acetyl-L-glutamate 5-phosphotransferase</fullName>
    </alternativeName>
    <alternativeName>
        <fullName evidence="1">NAG kinase</fullName>
        <shortName evidence="1">NAGK</shortName>
    </alternativeName>
</protein>